<accession>P99136</accession>
<accession>Q9Z5C5</accession>
<name>G3P1_STAAN</name>
<comment type="function">
    <text evidence="2">Catalyzes the oxidative phosphorylation of glyceraldehyde 3-phosphate (G3P) to 1,3-bisphosphoglycerate (BPG) using the cofactor NAD. The first reaction step involves the formation of a hemiacetal intermediate between G3P and a cysteine residue, and this hemiacetal intermediate is then oxidized to a thioester, with concomitant reduction of NAD to NADH. The reduced NADH is then exchanged with the second NAD, and the thioester is attacked by a nucleophilic inorganic phosphate to produce BPG.</text>
</comment>
<comment type="catalytic activity">
    <reaction evidence="2">
        <text>D-glyceraldehyde 3-phosphate + phosphate + NAD(+) = (2R)-3-phospho-glyceroyl phosphate + NADH + H(+)</text>
        <dbReference type="Rhea" id="RHEA:10300"/>
        <dbReference type="ChEBI" id="CHEBI:15378"/>
        <dbReference type="ChEBI" id="CHEBI:43474"/>
        <dbReference type="ChEBI" id="CHEBI:57540"/>
        <dbReference type="ChEBI" id="CHEBI:57604"/>
        <dbReference type="ChEBI" id="CHEBI:57945"/>
        <dbReference type="ChEBI" id="CHEBI:59776"/>
        <dbReference type="EC" id="1.2.1.12"/>
    </reaction>
</comment>
<comment type="pathway">
    <text evidence="3">Carbohydrate degradation; glycolysis; pyruvate from D-glyceraldehyde 3-phosphate: step 1/5.</text>
</comment>
<comment type="subunit">
    <text evidence="2">Homotetramer.</text>
</comment>
<comment type="subcellular location">
    <subcellularLocation>
        <location evidence="3">Cytoplasm</location>
    </subcellularLocation>
</comment>
<comment type="similarity">
    <text evidence="3">Belongs to the glyceraldehyde-3-phosphate dehydrogenase family.</text>
</comment>
<protein>
    <recommendedName>
        <fullName evidence="2">Glyceraldehyde-3-phosphate dehydrogenase 1</fullName>
        <shortName evidence="2">GAPDH 1</shortName>
        <ecNumber evidence="2">1.2.1.12</ecNumber>
    </recommendedName>
    <alternativeName>
        <fullName evidence="2">NAD-dependent glyceraldehyde-3-phosphate dehydrogenase</fullName>
    </alternativeName>
</protein>
<organism>
    <name type="scientific">Staphylococcus aureus (strain N315)</name>
    <dbReference type="NCBI Taxonomy" id="158879"/>
    <lineage>
        <taxon>Bacteria</taxon>
        <taxon>Bacillati</taxon>
        <taxon>Bacillota</taxon>
        <taxon>Bacilli</taxon>
        <taxon>Bacillales</taxon>
        <taxon>Staphylococcaceae</taxon>
        <taxon>Staphylococcus</taxon>
    </lineage>
</organism>
<sequence length="336" mass="36281">MAVKVAINGFGRIGRLAFRRIQEVEGLEVVAVNDLTDDDMLAHLLKYDTMQGRFTGEVEVVDGGFRVNGKEVKSFSEPDASKLPWKDLNIDVVLECTGFYTDKDKAQAHIEAGAKKVLISAPATGDLKTIVFNTNHQELDGSETVVSGASCTTNSLAPVAKVLNDDFGLVEGLMTTIHAYTGDQNTQDAPHRKGDKRRARAAAENIIPNSTGAAKAIGKVIPEIDGKLDGGAQRVPVATGSLTELTVVLEKQDVTVEQVNEAMKNASNESFGYTEDEIVSSDVVGMTYGSLFDATQTRVMSVGDRQLVKVAAWYDNEMSYTAQLVRTLAYLAELSK</sequence>
<reference key="1">
    <citation type="journal article" date="2001" name="Lancet">
        <title>Whole genome sequencing of meticillin-resistant Staphylococcus aureus.</title>
        <authorList>
            <person name="Kuroda M."/>
            <person name="Ohta T."/>
            <person name="Uchiyama I."/>
            <person name="Baba T."/>
            <person name="Yuzawa H."/>
            <person name="Kobayashi I."/>
            <person name="Cui L."/>
            <person name="Oguchi A."/>
            <person name="Aoki K."/>
            <person name="Nagai Y."/>
            <person name="Lian J.-Q."/>
            <person name="Ito T."/>
            <person name="Kanamori M."/>
            <person name="Matsumaru H."/>
            <person name="Maruyama A."/>
            <person name="Murakami H."/>
            <person name="Hosoyama A."/>
            <person name="Mizutani-Ui Y."/>
            <person name="Takahashi N.K."/>
            <person name="Sawano T."/>
            <person name="Inoue R."/>
            <person name="Kaito C."/>
            <person name="Sekimizu K."/>
            <person name="Hirakawa H."/>
            <person name="Kuhara S."/>
            <person name="Goto S."/>
            <person name="Yabuzaki J."/>
            <person name="Kanehisa M."/>
            <person name="Yamashita A."/>
            <person name="Oshima K."/>
            <person name="Furuya K."/>
            <person name="Yoshino C."/>
            <person name="Shiba T."/>
            <person name="Hattori M."/>
            <person name="Ogasawara N."/>
            <person name="Hayashi H."/>
            <person name="Hiramatsu K."/>
        </authorList>
    </citation>
    <scope>NUCLEOTIDE SEQUENCE [LARGE SCALE GENOMIC DNA]</scope>
    <source>
        <strain>N315</strain>
    </source>
</reference>
<reference key="2">
    <citation type="journal article" date="2005" name="J. Microbiol. Methods">
        <title>Correlation of proteomic and transcriptomic profiles of Staphylococcus aureus during the post-exponential phase of growth.</title>
        <authorList>
            <person name="Scherl A."/>
            <person name="Francois P."/>
            <person name="Bento M."/>
            <person name="Deshusses J.M."/>
            <person name="Charbonnier Y."/>
            <person name="Converset V."/>
            <person name="Huyghe A."/>
            <person name="Walter N."/>
            <person name="Hoogland C."/>
            <person name="Appel R.D."/>
            <person name="Sanchez J.-C."/>
            <person name="Zimmermann-Ivol C.G."/>
            <person name="Corthals G.L."/>
            <person name="Hochstrasser D.F."/>
            <person name="Schrenzel J."/>
        </authorList>
    </citation>
    <scope>IDENTIFICATION BY MASS SPECTROMETRY</scope>
    <source>
        <strain>N315</strain>
    </source>
</reference>
<reference key="3">
    <citation type="submission" date="2007-10" db="UniProtKB">
        <title>Shotgun proteomic analysis of total and membrane protein extracts of S. aureus strain N315.</title>
        <authorList>
            <person name="Vaezzadeh A.R."/>
            <person name="Deshusses J."/>
            <person name="Lescuyer P."/>
            <person name="Hochstrasser D.F."/>
        </authorList>
    </citation>
    <scope>IDENTIFICATION BY MASS SPECTROMETRY [LARGE SCALE ANALYSIS]</scope>
    <source>
        <strain>N315</strain>
    </source>
</reference>
<proteinExistence type="evidence at protein level"/>
<gene>
    <name type="primary">gapA1</name>
    <name type="synonym">gap</name>
    <name type="synonym">gapA</name>
    <name type="ordered locus">SA0727</name>
</gene>
<dbReference type="EC" id="1.2.1.12" evidence="2"/>
<dbReference type="EMBL" id="BA000018">
    <property type="protein sequence ID" value="BAB41960.1"/>
    <property type="molecule type" value="Genomic_DNA"/>
</dbReference>
<dbReference type="PIR" id="E89850">
    <property type="entry name" value="E89850"/>
</dbReference>
<dbReference type="RefSeq" id="WP_000279414.1">
    <property type="nucleotide sequence ID" value="NC_002745.2"/>
</dbReference>
<dbReference type="SMR" id="P99136"/>
<dbReference type="EnsemblBacteria" id="BAB41960">
    <property type="protein sequence ID" value="BAB41960"/>
    <property type="gene ID" value="BAB41960"/>
</dbReference>
<dbReference type="KEGG" id="sau:SA0727"/>
<dbReference type="HOGENOM" id="CLU_030140_0_0_9"/>
<dbReference type="UniPathway" id="UPA00109">
    <property type="reaction ID" value="UER00184"/>
</dbReference>
<dbReference type="GO" id="GO:0005737">
    <property type="term" value="C:cytoplasm"/>
    <property type="evidence" value="ECO:0007669"/>
    <property type="project" value="UniProtKB-SubCell"/>
</dbReference>
<dbReference type="GO" id="GO:0004365">
    <property type="term" value="F:glyceraldehyde-3-phosphate dehydrogenase (NAD+) (phosphorylating) activity"/>
    <property type="evidence" value="ECO:0000250"/>
    <property type="project" value="UniProtKB"/>
</dbReference>
<dbReference type="GO" id="GO:0051287">
    <property type="term" value="F:NAD binding"/>
    <property type="evidence" value="ECO:0000250"/>
    <property type="project" value="UniProtKB"/>
</dbReference>
<dbReference type="GO" id="GO:0050661">
    <property type="term" value="F:NADP binding"/>
    <property type="evidence" value="ECO:0007669"/>
    <property type="project" value="InterPro"/>
</dbReference>
<dbReference type="GO" id="GO:0006006">
    <property type="term" value="P:glucose metabolic process"/>
    <property type="evidence" value="ECO:0007669"/>
    <property type="project" value="InterPro"/>
</dbReference>
<dbReference type="GO" id="GO:0006096">
    <property type="term" value="P:glycolytic process"/>
    <property type="evidence" value="ECO:0007669"/>
    <property type="project" value="UniProtKB-UniPathway"/>
</dbReference>
<dbReference type="CDD" id="cd18126">
    <property type="entry name" value="GAPDH_I_C"/>
    <property type="match status" value="1"/>
</dbReference>
<dbReference type="CDD" id="cd05214">
    <property type="entry name" value="GAPDH_I_N"/>
    <property type="match status" value="1"/>
</dbReference>
<dbReference type="FunFam" id="3.30.360.10:FF:000002">
    <property type="entry name" value="Glyceraldehyde-3-phosphate dehydrogenase"/>
    <property type="match status" value="1"/>
</dbReference>
<dbReference type="FunFam" id="3.40.50.720:FF:000001">
    <property type="entry name" value="Glyceraldehyde-3-phosphate dehydrogenase"/>
    <property type="match status" value="1"/>
</dbReference>
<dbReference type="Gene3D" id="3.30.360.10">
    <property type="entry name" value="Dihydrodipicolinate Reductase, domain 2"/>
    <property type="match status" value="1"/>
</dbReference>
<dbReference type="Gene3D" id="3.40.50.720">
    <property type="entry name" value="NAD(P)-binding Rossmann-like Domain"/>
    <property type="match status" value="1"/>
</dbReference>
<dbReference type="InterPro" id="IPR020831">
    <property type="entry name" value="GlycerAld/Erythrose_P_DH"/>
</dbReference>
<dbReference type="InterPro" id="IPR020830">
    <property type="entry name" value="GlycerAld_3-P_DH_AS"/>
</dbReference>
<dbReference type="InterPro" id="IPR020829">
    <property type="entry name" value="GlycerAld_3-P_DH_cat"/>
</dbReference>
<dbReference type="InterPro" id="IPR020828">
    <property type="entry name" value="GlycerAld_3-P_DH_NAD(P)-bd"/>
</dbReference>
<dbReference type="InterPro" id="IPR006424">
    <property type="entry name" value="Glyceraldehyde-3-P_DH_1"/>
</dbReference>
<dbReference type="InterPro" id="IPR036291">
    <property type="entry name" value="NAD(P)-bd_dom_sf"/>
</dbReference>
<dbReference type="NCBIfam" id="TIGR01534">
    <property type="entry name" value="GAPDH-I"/>
    <property type="match status" value="1"/>
</dbReference>
<dbReference type="PANTHER" id="PTHR43148">
    <property type="entry name" value="GLYCERALDEHYDE-3-PHOSPHATE DEHYDROGENASE 2"/>
    <property type="match status" value="1"/>
</dbReference>
<dbReference type="Pfam" id="PF02800">
    <property type="entry name" value="Gp_dh_C"/>
    <property type="match status" value="1"/>
</dbReference>
<dbReference type="Pfam" id="PF00044">
    <property type="entry name" value="Gp_dh_N"/>
    <property type="match status" value="1"/>
</dbReference>
<dbReference type="PIRSF" id="PIRSF000149">
    <property type="entry name" value="GAP_DH"/>
    <property type="match status" value="1"/>
</dbReference>
<dbReference type="PRINTS" id="PR00078">
    <property type="entry name" value="G3PDHDRGNASE"/>
</dbReference>
<dbReference type="SMART" id="SM00846">
    <property type="entry name" value="Gp_dh_N"/>
    <property type="match status" value="1"/>
</dbReference>
<dbReference type="SUPFAM" id="SSF55347">
    <property type="entry name" value="Glyceraldehyde-3-phosphate dehydrogenase-like, C-terminal domain"/>
    <property type="match status" value="1"/>
</dbReference>
<dbReference type="SUPFAM" id="SSF51735">
    <property type="entry name" value="NAD(P)-binding Rossmann-fold domains"/>
    <property type="match status" value="1"/>
</dbReference>
<dbReference type="PROSITE" id="PS00071">
    <property type="entry name" value="GAPDH"/>
    <property type="match status" value="1"/>
</dbReference>
<keyword id="KW-0963">Cytoplasm</keyword>
<keyword id="KW-0324">Glycolysis</keyword>
<keyword id="KW-0520">NAD</keyword>
<keyword id="KW-0547">Nucleotide-binding</keyword>
<keyword id="KW-0560">Oxidoreductase</keyword>
<feature type="chain" id="PRO_0000145684" description="Glyceraldehyde-3-phosphate dehydrogenase 1">
    <location>
        <begin position="1"/>
        <end position="336"/>
    </location>
</feature>
<feature type="active site" description="Nucleophile" evidence="2">
    <location>
        <position position="151"/>
    </location>
</feature>
<feature type="binding site" evidence="2">
    <location>
        <begin position="12"/>
        <end position="13"/>
    </location>
    <ligand>
        <name>NAD(+)</name>
        <dbReference type="ChEBI" id="CHEBI:57540"/>
    </ligand>
</feature>
<feature type="binding site" evidence="2">
    <location>
        <position position="34"/>
    </location>
    <ligand>
        <name>NAD(+)</name>
        <dbReference type="ChEBI" id="CHEBI:57540"/>
    </ligand>
</feature>
<feature type="binding site" evidence="2">
    <location>
        <position position="120"/>
    </location>
    <ligand>
        <name>NAD(+)</name>
        <dbReference type="ChEBI" id="CHEBI:57540"/>
    </ligand>
</feature>
<feature type="binding site" evidence="2">
    <location>
        <begin position="150"/>
        <end position="152"/>
    </location>
    <ligand>
        <name>D-glyceraldehyde 3-phosphate</name>
        <dbReference type="ChEBI" id="CHEBI:59776"/>
    </ligand>
</feature>
<feature type="binding site" evidence="2">
    <location>
        <position position="181"/>
    </location>
    <ligand>
        <name>D-glyceraldehyde 3-phosphate</name>
        <dbReference type="ChEBI" id="CHEBI:59776"/>
    </ligand>
</feature>
<feature type="binding site" evidence="1">
    <location>
        <position position="198"/>
    </location>
    <ligand>
        <name>D-glyceraldehyde 3-phosphate</name>
        <dbReference type="ChEBI" id="CHEBI:59776"/>
    </ligand>
</feature>
<feature type="binding site" evidence="2">
    <location>
        <begin position="211"/>
        <end position="212"/>
    </location>
    <ligand>
        <name>D-glyceraldehyde 3-phosphate</name>
        <dbReference type="ChEBI" id="CHEBI:59776"/>
    </ligand>
</feature>
<feature type="binding site" evidence="2">
    <location>
        <position position="234"/>
    </location>
    <ligand>
        <name>D-glyceraldehyde 3-phosphate</name>
        <dbReference type="ChEBI" id="CHEBI:59776"/>
    </ligand>
</feature>
<feature type="binding site" evidence="2">
    <location>
        <position position="316"/>
    </location>
    <ligand>
        <name>NAD(+)</name>
        <dbReference type="ChEBI" id="CHEBI:57540"/>
    </ligand>
</feature>
<feature type="site" description="Activates thiol group during catalysis" evidence="2">
    <location>
        <position position="178"/>
    </location>
</feature>
<evidence type="ECO:0000250" key="1">
    <source>
        <dbReference type="UniProtKB" id="P00362"/>
    </source>
</evidence>
<evidence type="ECO:0000250" key="2">
    <source>
        <dbReference type="UniProtKB" id="Q6GIL8"/>
    </source>
</evidence>
<evidence type="ECO:0000305" key="3"/>